<name>TX2A_MYRPI</name>
<comment type="function">
    <text evidence="3 4">Heterodimer protein that may serve both defensive (pain-inducing) and predatory (insecticidal) roles (PubMed:28513074). Has membrane-disrupting activity and shows induction of non-specific calcium influx into cells, (PubMed:28513074). Shows broad-spectrum activity against a diverse range of bacteria, and cell lines, as well as hemolytic activity (EC(50)=2.18 uM) (PubMed:28513074). In vivo, shows moderate insecticidal activity against D.melanogaster and potent anthelmintic activity against the veterinary nematode H.contortus (PubMed:32629771). In addition, intraplantar injection into mice induces nocifensive behavior and mechanical allodynia (PubMed:28513074).</text>
</comment>
<comment type="subunit">
    <text evidence="2 6">Heterodimer with M-MIITX-Mp2b (pilosin-3b) (AC P0C023); disulfide-linked (PubMed:15019477, PubMed:8866004). Only heterodimers (and not monomers) have been identified in the venom (PubMed:15019477).</text>
</comment>
<comment type="subcellular location">
    <subcellularLocation>
        <location evidence="5">Secreted</location>
    </subcellularLocation>
</comment>
<comment type="tissue specificity">
    <text evidence="15">Expressed by the venom gland.</text>
</comment>
<comment type="allergen">
    <text evidence="2">The heterodimer causes an allergic reaction in human. Binds to IgE. It is speculated that the antigenic site is on the A chain.</text>
</comment>
<comment type="toxic dose">
    <text evidence="4">LD(50) of the heterodimer is 260.1 +- 16.6 pmol/g towards D.melanogaster.</text>
</comment>
<comment type="miscellaneous">
    <text evidence="13 14">Dekan et al., 2017 and Nixon et al., 2020 report synthesis and functional analysis of heterodimers with different disulfide patterns as well as different A and B chain monomeric forms.</text>
</comment>
<comment type="similarity">
    <text evidence="12">Belongs to the formicidae venom precursor-01 superfamily. Ant pilosulin family.</text>
</comment>
<accession>Q26464</accession>
<evidence type="ECO:0000255" key="1"/>
<evidence type="ECO:0000269" key="2">
    <source>
    </source>
</evidence>
<evidence type="ECO:0000269" key="3">
    <source>
    </source>
</evidence>
<evidence type="ECO:0000269" key="4">
    <source>
    </source>
</evidence>
<evidence type="ECO:0000269" key="5">
    <source>
    </source>
</evidence>
<evidence type="ECO:0000269" key="6">
    <source>
    </source>
</evidence>
<evidence type="ECO:0000303" key="7">
    <source>
    </source>
</evidence>
<evidence type="ECO:0000303" key="8">
    <source>
    </source>
</evidence>
<evidence type="ECO:0000303" key="9">
    <source>
    </source>
</evidence>
<evidence type="ECO:0000303" key="10">
    <source>
    </source>
</evidence>
<evidence type="ECO:0000303" key="11">
    <source>
    </source>
</evidence>
<evidence type="ECO:0000305" key="12"/>
<evidence type="ECO:0000305" key="13">
    <source>
    </source>
</evidence>
<evidence type="ECO:0000305" key="14">
    <source>
    </source>
</evidence>
<evidence type="ECO:0000305" key="15">
    <source>
    </source>
</evidence>
<dbReference type="EMBL" id="S81785">
    <property type="protein sequence ID" value="AAB36316.1"/>
    <property type="molecule type" value="mRNA"/>
</dbReference>
<dbReference type="PIR" id="S65711">
    <property type="entry name" value="S65711"/>
</dbReference>
<dbReference type="Allergome" id="3381">
    <property type="allergen name" value="Myr p 2.0101"/>
</dbReference>
<dbReference type="Allergome" id="3575">
    <property type="allergen name" value="Myr p 2.0102"/>
</dbReference>
<dbReference type="Allergome" id="481">
    <property type="allergen name" value="Myr p 2"/>
</dbReference>
<dbReference type="GO" id="GO:0005576">
    <property type="term" value="C:extracellular region"/>
    <property type="evidence" value="ECO:0007669"/>
    <property type="project" value="UniProtKB-SubCell"/>
</dbReference>
<dbReference type="GO" id="GO:0090729">
    <property type="term" value="F:toxin activity"/>
    <property type="evidence" value="ECO:0007669"/>
    <property type="project" value="UniProtKB-KW"/>
</dbReference>
<dbReference type="GO" id="GO:0042742">
    <property type="term" value="P:defense response to bacterium"/>
    <property type="evidence" value="ECO:0007669"/>
    <property type="project" value="UniProtKB-KW"/>
</dbReference>
<dbReference type="GO" id="GO:0031640">
    <property type="term" value="P:killing of cells of another organism"/>
    <property type="evidence" value="ECO:0007669"/>
    <property type="project" value="UniProtKB-KW"/>
</dbReference>
<dbReference type="InterPro" id="IPR049518">
    <property type="entry name" value="Pilosulin"/>
</dbReference>
<dbReference type="Pfam" id="PF17499">
    <property type="entry name" value="Pilosulin"/>
    <property type="match status" value="1"/>
</dbReference>
<sequence>MKLSCLLLTLAIIFVLTIVHAPNVEAKALADPESDAVGFADAVGEADPIDWKKVDWKKVSKKTCKVMLKACKFLG</sequence>
<reference key="1">
    <citation type="journal article" date="1996" name="Biochim. Biophys. Acta">
        <title>Molecular cloning and characterization of the major allergen Myr p II from the venom of the jumper ant Myrmecia pilosula: Myr p I and Myr p II share a common protein leader sequence.</title>
        <authorList>
            <person name="Street M.D."/>
            <person name="Donovan G.R."/>
            <person name="Baldo B.A."/>
        </authorList>
    </citation>
    <scope>NUCLEOTIDE SEQUENCE [MRNA]</scope>
    <scope>PROTEIN SEQUENCE OF 49-54</scope>
    <scope>SUBCELLULAR LOCATION</scope>
    <source>
        <tissue>Venom</tissue>
        <tissue>Venom gland</tissue>
    </source>
</reference>
<reference key="2">
    <citation type="journal article" date="1996" name="Biochem. Mol. Biol. Int.">
        <title>Expression of jumper ant (Myrmecia pilosula) venom allergens: post-translational processing of allergen gene products.</title>
        <authorList>
            <person name="Donovan G.R."/>
            <person name="Street M.D."/>
            <person name="Tetaz T."/>
            <person name="Smith A.I."/>
            <person name="Alewood D."/>
            <person name="Alewood P.F."/>
            <person name="Sutherland S.K."/>
            <person name="Baldo B.A."/>
        </authorList>
    </citation>
    <scope>PARTIAL PROTEIN SEQUENCE</scope>
    <scope>SUBUNIT</scope>
    <source>
        <tissue>Venom</tissue>
    </source>
</reference>
<reference key="3">
    <citation type="journal article" date="2004" name="Toxicon">
        <title>Characterisation of major peptides in 'jack jumper' ant venom by mass spectrometry.</title>
        <authorList>
            <person name="Davies N.W."/>
            <person name="Wiese M.D."/>
            <person name="Brown S.G.A."/>
        </authorList>
    </citation>
    <scope>AMIDATION AT LEU-74</scope>
    <scope>SUBUNIT</scope>
    <scope>IDENTIFICATION BY MASS SPECTROMETRY</scope>
    <scope>DISULFIDE BOND</scope>
    <source>
        <tissue>Venom</tissue>
    </source>
</reference>
<reference key="4">
    <citation type="journal article" date="2016" name="Toxins">
        <title>The biochemical toxin arsenal from ant venoms.</title>
        <authorList>
            <person name="Touchard A."/>
            <person name="Aili S.R."/>
            <person name="Fox E.G."/>
            <person name="Escoubas P."/>
            <person name="Orivel J."/>
            <person name="Nicholson G.M."/>
            <person name="Dejean A."/>
        </authorList>
    </citation>
    <scope>REVIEW</scope>
    <scope>NOMENCLATURE</scope>
</reference>
<reference key="5">
    <citation type="journal article" date="2020" name="Biomedicines">
        <title>It takes two: dimerization is essential for the broad-spectrum predatory and defensive activities of the venom peptide Mp1a from the jack jumper ant Myrmecia pilosula.</title>
        <authorList>
            <person name="Nixon S.A."/>
            <person name="Dekan Z."/>
            <person name="Robinson S.D."/>
            <person name="Guo S."/>
            <person name="Vetter I."/>
            <person name="Kotze A.C."/>
            <person name="Alewood P.F."/>
            <person name="King G.F."/>
            <person name="Herzig V."/>
        </authorList>
    </citation>
    <scope>FUNCTION</scope>
    <scope>SYNTHESIS OF 49-74 IN COMPLEX WITH B CHAIN</scope>
    <scope>BIOASSAY</scope>
    <scope>TOXIC DOSE</scope>
</reference>
<reference key="6">
    <citation type="journal article" date="2017" name="Angew. Chem. Int. Ed.">
        <title>Delta-myrtoxin-Mp1a is a helical heterodimer from the venom of the jack jumper ant that has antimicrobial, membrane-disrupting, and nociceptive activities.</title>
        <authorList>
            <person name="Dekan Z."/>
            <person name="Headey S.J."/>
            <person name="Scanlon M."/>
            <person name="Baldo B.A."/>
            <person name="Lee T.H."/>
            <person name="Aguilar M.I."/>
            <person name="Deuis J.R."/>
            <person name="Vetter I."/>
            <person name="Elliott A.G."/>
            <person name="Amado M."/>
            <person name="Cooper M.A."/>
            <person name="Alewood D."/>
            <person name="Alewood P.F."/>
        </authorList>
    </citation>
    <scope>STRUCTURE BY NMR OF 49-74 IN COMPLEX WITH B CHAIN</scope>
    <scope>FUNCTION</scope>
    <scope>SYNTHESIS OF 49-74 IN COMPLEX WITH B CHAIN</scope>
    <scope>BIOASSAY</scope>
</reference>
<feature type="signal peptide" evidence="1">
    <location>
        <begin position="1"/>
        <end position="26"/>
    </location>
</feature>
<feature type="propeptide" id="PRO_0000035164" evidence="15">
    <location>
        <begin position="27"/>
        <end position="48"/>
    </location>
</feature>
<feature type="peptide" id="PRO_0000035165" description="M-myrmeciitoxin-Mp2a" evidence="15">
    <location>
        <begin position="49"/>
        <end position="74"/>
    </location>
</feature>
<feature type="modified residue" description="Leucine amide" evidence="2">
    <location>
        <position position="74"/>
    </location>
</feature>
<feature type="disulfide bond" description="Interchain (with C-17 in M-MIITX-Mp2b)" evidence="2">
    <location>
        <position position="64"/>
    </location>
</feature>
<feature type="disulfide bond" description="Interchain (with C-10 in M-MIITX-Mp2b)" evidence="2">
    <location>
        <position position="71"/>
    </location>
</feature>
<proteinExistence type="evidence at protein level"/>
<protein>
    <recommendedName>
        <fullName evidence="8">M-myrmeciitoxin-Mp2a</fullName>
        <shortName evidence="8">M-MIITX-Mp2a</shortName>
    </recommendedName>
    <alternativeName>
        <fullName evidence="11">Allergen Myr p II</fullName>
    </alternativeName>
    <alternativeName>
        <fullName evidence="9 10">DELTA-myrtoxin-Mp1a A chain</fullName>
        <shortName evidence="9 10">Mp1a A chain</shortName>
    </alternativeName>
    <alternativeName>
        <fullName evidence="12">Pilosin-3 subunit a</fullName>
        <shortName evidence="8 12">Pilosulin-3a</shortName>
    </alternativeName>
    <alternativeName>
        <fullName evidence="7">Pilosulin-2</fullName>
    </alternativeName>
    <allergenName evidence="11">Myr p 2</allergenName>
</protein>
<keyword id="KW-0020">Allergen</keyword>
<keyword id="KW-0027">Amidation</keyword>
<keyword id="KW-0044">Antibiotic</keyword>
<keyword id="KW-0929">Antimicrobial</keyword>
<keyword id="KW-0204">Cytolysis</keyword>
<keyword id="KW-0903">Direct protein sequencing</keyword>
<keyword id="KW-1015">Disulfide bond</keyword>
<keyword id="KW-0354">Hemolysis</keyword>
<keyword id="KW-0964">Secreted</keyword>
<keyword id="KW-0732">Signal</keyword>
<keyword id="KW-0800">Toxin</keyword>
<organism>
    <name type="scientific">Myrmecia pilosula</name>
    <name type="common">Jack jumper ant</name>
    <name type="synonym">Australian jumper ant</name>
    <dbReference type="NCBI Taxonomy" id="13618"/>
    <lineage>
        <taxon>Eukaryota</taxon>
        <taxon>Metazoa</taxon>
        <taxon>Ecdysozoa</taxon>
        <taxon>Arthropoda</taxon>
        <taxon>Hexapoda</taxon>
        <taxon>Insecta</taxon>
        <taxon>Pterygota</taxon>
        <taxon>Neoptera</taxon>
        <taxon>Endopterygota</taxon>
        <taxon>Hymenoptera</taxon>
        <taxon>Apocrita</taxon>
        <taxon>Aculeata</taxon>
        <taxon>Formicoidea</taxon>
        <taxon>Formicidae</taxon>
        <taxon>Myrmeciinae</taxon>
        <taxon>Myrmeciini</taxon>
        <taxon>Myrmecia</taxon>
    </lineage>
</organism>